<keyword id="KW-0131">Cell cycle</keyword>
<keyword id="KW-0132">Cell division</keyword>
<keyword id="KW-0963">Cytoplasm</keyword>
<keyword id="KW-0717">Septation</keyword>
<reference key="1">
    <citation type="submission" date="2009-01" db="EMBL/GenBank/DDBJ databases">
        <title>Complete sequence of chromosome of Caldicellulosiruptor becscii DSM 6725.</title>
        <authorList>
            <person name="Lucas S."/>
            <person name="Copeland A."/>
            <person name="Lapidus A."/>
            <person name="Glavina del Rio T."/>
            <person name="Tice H."/>
            <person name="Bruce D."/>
            <person name="Goodwin L."/>
            <person name="Pitluck S."/>
            <person name="Sims D."/>
            <person name="Meincke L."/>
            <person name="Brettin T."/>
            <person name="Detter J.C."/>
            <person name="Han C."/>
            <person name="Larimer F."/>
            <person name="Land M."/>
            <person name="Hauser L."/>
            <person name="Kyrpides N."/>
            <person name="Ovchinnikova G."/>
            <person name="Kataeva I."/>
            <person name="Adams M.W.W."/>
        </authorList>
    </citation>
    <scope>NUCLEOTIDE SEQUENCE [LARGE SCALE GENOMIC DNA]</scope>
    <source>
        <strain>ATCC BAA-1888 / DSM 6725 / KCTC 15123 / Z-1320</strain>
    </source>
</reference>
<sequence length="145" mass="16767">MFDNLQRKFLNLIGIEIEEEDKPQEVSKTKDENAKPKHETPKVVTIGKANQTEVTVYNLKLFDEVVKVCDALRENKIVVFNLEQVAEEHIQRIIDFVSGAVYVLDAKIHKVSKKIFVVVPRSIDLEVDEQLKEEFRSKGVFAWLK</sequence>
<organism>
    <name type="scientific">Caldicellulosiruptor bescii (strain ATCC BAA-1888 / DSM 6725 / KCTC 15123 / Z-1320)</name>
    <name type="common">Anaerocellum thermophilum</name>
    <dbReference type="NCBI Taxonomy" id="521460"/>
    <lineage>
        <taxon>Bacteria</taxon>
        <taxon>Bacillati</taxon>
        <taxon>Bacillota</taxon>
        <taxon>Bacillota incertae sedis</taxon>
        <taxon>Caldicellulosiruptorales</taxon>
        <taxon>Caldicellulosiruptoraceae</taxon>
        <taxon>Caldicellulosiruptor</taxon>
    </lineage>
</organism>
<name>SEPF_CALBD</name>
<proteinExistence type="inferred from homology"/>
<feature type="chain" id="PRO_1000164522" description="Cell division protein SepF">
    <location>
        <begin position="1"/>
        <end position="145"/>
    </location>
</feature>
<feature type="region of interest" description="Disordered" evidence="2">
    <location>
        <begin position="23"/>
        <end position="42"/>
    </location>
</feature>
<feature type="compositionally biased region" description="Basic and acidic residues" evidence="2">
    <location>
        <begin position="23"/>
        <end position="41"/>
    </location>
</feature>
<gene>
    <name evidence="1" type="primary">sepF</name>
    <name type="ordered locus">Athe_1345</name>
</gene>
<protein>
    <recommendedName>
        <fullName evidence="1">Cell division protein SepF</fullName>
    </recommendedName>
</protein>
<evidence type="ECO:0000255" key="1">
    <source>
        <dbReference type="HAMAP-Rule" id="MF_01197"/>
    </source>
</evidence>
<evidence type="ECO:0000256" key="2">
    <source>
        <dbReference type="SAM" id="MobiDB-lite"/>
    </source>
</evidence>
<comment type="function">
    <text evidence="1">Cell division protein that is part of the divisome complex and is recruited early to the Z-ring. Probably stimulates Z-ring formation, perhaps through the cross-linking of FtsZ protofilaments. Its function overlaps with FtsA.</text>
</comment>
<comment type="subunit">
    <text evidence="1">Homodimer. Interacts with FtsZ.</text>
</comment>
<comment type="subcellular location">
    <subcellularLocation>
        <location evidence="1">Cytoplasm</location>
    </subcellularLocation>
    <text evidence="1">Localizes to the division site, in a FtsZ-dependent manner.</text>
</comment>
<comment type="similarity">
    <text evidence="1">Belongs to the SepF family.</text>
</comment>
<accession>B9MRZ1</accession>
<dbReference type="EMBL" id="CP001393">
    <property type="protein sequence ID" value="ACM60445.1"/>
    <property type="molecule type" value="Genomic_DNA"/>
</dbReference>
<dbReference type="RefSeq" id="WP_015907816.1">
    <property type="nucleotide sequence ID" value="NC_012034.1"/>
</dbReference>
<dbReference type="SMR" id="B9MRZ1"/>
<dbReference type="STRING" id="521460.Athe_1345"/>
<dbReference type="GeneID" id="31772692"/>
<dbReference type="KEGG" id="ate:Athe_1345"/>
<dbReference type="eggNOG" id="COG1799">
    <property type="taxonomic scope" value="Bacteria"/>
</dbReference>
<dbReference type="HOGENOM" id="CLU_078499_4_1_9"/>
<dbReference type="Proteomes" id="UP000007723">
    <property type="component" value="Chromosome"/>
</dbReference>
<dbReference type="GO" id="GO:0005737">
    <property type="term" value="C:cytoplasm"/>
    <property type="evidence" value="ECO:0007669"/>
    <property type="project" value="UniProtKB-SubCell"/>
</dbReference>
<dbReference type="GO" id="GO:0000917">
    <property type="term" value="P:division septum assembly"/>
    <property type="evidence" value="ECO:0007669"/>
    <property type="project" value="UniProtKB-KW"/>
</dbReference>
<dbReference type="GO" id="GO:0043093">
    <property type="term" value="P:FtsZ-dependent cytokinesis"/>
    <property type="evidence" value="ECO:0007669"/>
    <property type="project" value="UniProtKB-UniRule"/>
</dbReference>
<dbReference type="Gene3D" id="3.30.110.150">
    <property type="entry name" value="SepF-like protein"/>
    <property type="match status" value="1"/>
</dbReference>
<dbReference type="HAMAP" id="MF_01197">
    <property type="entry name" value="SepF"/>
    <property type="match status" value="1"/>
</dbReference>
<dbReference type="InterPro" id="IPR023052">
    <property type="entry name" value="Cell_div_SepF"/>
</dbReference>
<dbReference type="InterPro" id="IPR007561">
    <property type="entry name" value="Cell_div_SepF/SepF-rel"/>
</dbReference>
<dbReference type="InterPro" id="IPR038594">
    <property type="entry name" value="SepF-like_sf"/>
</dbReference>
<dbReference type="PANTHER" id="PTHR35798">
    <property type="entry name" value="CELL DIVISION PROTEIN SEPF"/>
    <property type="match status" value="1"/>
</dbReference>
<dbReference type="PANTHER" id="PTHR35798:SF1">
    <property type="entry name" value="CELL DIVISION PROTEIN SEPF"/>
    <property type="match status" value="1"/>
</dbReference>
<dbReference type="Pfam" id="PF04472">
    <property type="entry name" value="SepF"/>
    <property type="match status" value="1"/>
</dbReference>